<evidence type="ECO:0000255" key="1">
    <source>
        <dbReference type="HAMAP-Rule" id="MF_00009"/>
    </source>
</evidence>
<gene>
    <name evidence="1" type="primary">ybeY</name>
    <name type="ordered locus">Moth_0595</name>
</gene>
<dbReference type="EC" id="3.1.-.-" evidence="1"/>
<dbReference type="EMBL" id="CP000232">
    <property type="protein sequence ID" value="ABC18925.1"/>
    <property type="molecule type" value="Genomic_DNA"/>
</dbReference>
<dbReference type="RefSeq" id="YP_429468.1">
    <property type="nucleotide sequence ID" value="NC_007644.1"/>
</dbReference>
<dbReference type="SMR" id="Q2RKW4"/>
<dbReference type="STRING" id="264732.Moth_0595"/>
<dbReference type="EnsemblBacteria" id="ABC18925">
    <property type="protein sequence ID" value="ABC18925"/>
    <property type="gene ID" value="Moth_0595"/>
</dbReference>
<dbReference type="KEGG" id="mta:Moth_0595"/>
<dbReference type="PATRIC" id="fig|264732.11.peg.640"/>
<dbReference type="eggNOG" id="COG0319">
    <property type="taxonomic scope" value="Bacteria"/>
</dbReference>
<dbReference type="HOGENOM" id="CLU_106710_3_0_9"/>
<dbReference type="OrthoDB" id="9807740at2"/>
<dbReference type="GO" id="GO:0005737">
    <property type="term" value="C:cytoplasm"/>
    <property type="evidence" value="ECO:0007669"/>
    <property type="project" value="UniProtKB-SubCell"/>
</dbReference>
<dbReference type="GO" id="GO:0004222">
    <property type="term" value="F:metalloendopeptidase activity"/>
    <property type="evidence" value="ECO:0007669"/>
    <property type="project" value="InterPro"/>
</dbReference>
<dbReference type="GO" id="GO:0004521">
    <property type="term" value="F:RNA endonuclease activity"/>
    <property type="evidence" value="ECO:0007669"/>
    <property type="project" value="UniProtKB-UniRule"/>
</dbReference>
<dbReference type="GO" id="GO:0008270">
    <property type="term" value="F:zinc ion binding"/>
    <property type="evidence" value="ECO:0007669"/>
    <property type="project" value="UniProtKB-UniRule"/>
</dbReference>
<dbReference type="GO" id="GO:0006364">
    <property type="term" value="P:rRNA processing"/>
    <property type="evidence" value="ECO:0007669"/>
    <property type="project" value="UniProtKB-UniRule"/>
</dbReference>
<dbReference type="Gene3D" id="3.40.390.30">
    <property type="entry name" value="Metalloproteases ('zincins'), catalytic domain"/>
    <property type="match status" value="1"/>
</dbReference>
<dbReference type="HAMAP" id="MF_00009">
    <property type="entry name" value="Endoribonucl_YbeY"/>
    <property type="match status" value="1"/>
</dbReference>
<dbReference type="InterPro" id="IPR023091">
    <property type="entry name" value="MetalPrtase_cat_dom_sf_prd"/>
</dbReference>
<dbReference type="InterPro" id="IPR002036">
    <property type="entry name" value="YbeY"/>
</dbReference>
<dbReference type="InterPro" id="IPR020549">
    <property type="entry name" value="YbeY_CS"/>
</dbReference>
<dbReference type="NCBIfam" id="TIGR00043">
    <property type="entry name" value="rRNA maturation RNase YbeY"/>
    <property type="match status" value="1"/>
</dbReference>
<dbReference type="PANTHER" id="PTHR46986">
    <property type="entry name" value="ENDORIBONUCLEASE YBEY, CHLOROPLASTIC"/>
    <property type="match status" value="1"/>
</dbReference>
<dbReference type="PANTHER" id="PTHR46986:SF1">
    <property type="entry name" value="ENDORIBONUCLEASE YBEY, CHLOROPLASTIC"/>
    <property type="match status" value="1"/>
</dbReference>
<dbReference type="Pfam" id="PF02130">
    <property type="entry name" value="YbeY"/>
    <property type="match status" value="1"/>
</dbReference>
<dbReference type="SUPFAM" id="SSF55486">
    <property type="entry name" value="Metalloproteases ('zincins'), catalytic domain"/>
    <property type="match status" value="1"/>
</dbReference>
<dbReference type="PROSITE" id="PS01306">
    <property type="entry name" value="UPF0054"/>
    <property type="match status" value="1"/>
</dbReference>
<accession>Q2RKW4</accession>
<feature type="chain" id="PRO_0000284242" description="Endoribonuclease YbeY">
    <location>
        <begin position="1"/>
        <end position="156"/>
    </location>
</feature>
<feature type="binding site" evidence="1">
    <location>
        <position position="122"/>
    </location>
    <ligand>
        <name>Zn(2+)</name>
        <dbReference type="ChEBI" id="CHEBI:29105"/>
        <note>catalytic</note>
    </ligand>
</feature>
<feature type="binding site" evidence="1">
    <location>
        <position position="126"/>
    </location>
    <ligand>
        <name>Zn(2+)</name>
        <dbReference type="ChEBI" id="CHEBI:29105"/>
        <note>catalytic</note>
    </ligand>
</feature>
<feature type="binding site" evidence="1">
    <location>
        <position position="132"/>
    </location>
    <ligand>
        <name>Zn(2+)</name>
        <dbReference type="ChEBI" id="CHEBI:29105"/>
        <note>catalytic</note>
    </ligand>
</feature>
<organism>
    <name type="scientific">Moorella thermoacetica (strain ATCC 39073 / JCM 9320)</name>
    <dbReference type="NCBI Taxonomy" id="264732"/>
    <lineage>
        <taxon>Bacteria</taxon>
        <taxon>Bacillati</taxon>
        <taxon>Bacillota</taxon>
        <taxon>Clostridia</taxon>
        <taxon>Moorellales</taxon>
        <taxon>Moorellaceae</taxon>
        <taxon>Moorella</taxon>
    </lineage>
</organism>
<reference key="1">
    <citation type="journal article" date="2008" name="Environ. Microbiol.">
        <title>The complete genome sequence of Moorella thermoacetica (f. Clostridium thermoaceticum).</title>
        <authorList>
            <person name="Pierce E."/>
            <person name="Xie G."/>
            <person name="Barabote R.D."/>
            <person name="Saunders E."/>
            <person name="Han C.S."/>
            <person name="Detter J.C."/>
            <person name="Richardson P."/>
            <person name="Brettin T.S."/>
            <person name="Das A."/>
            <person name="Ljungdahl L.G."/>
            <person name="Ragsdale S.W."/>
        </authorList>
    </citation>
    <scope>NUCLEOTIDE SEQUENCE [LARGE SCALE GENOMIC DNA]</scope>
    <source>
        <strain>ATCC 39073 / JCM 9320</strain>
    </source>
</reference>
<proteinExistence type="inferred from homology"/>
<name>YBEY_MOOTA</name>
<keyword id="KW-0963">Cytoplasm</keyword>
<keyword id="KW-0255">Endonuclease</keyword>
<keyword id="KW-0378">Hydrolase</keyword>
<keyword id="KW-0479">Metal-binding</keyword>
<keyword id="KW-0540">Nuclease</keyword>
<keyword id="KW-0690">Ribosome biogenesis</keyword>
<keyword id="KW-0698">rRNA processing</keyword>
<keyword id="KW-0862">Zinc</keyword>
<sequence length="156" mass="16444">MECSINNQQADYPVGEELLSTLNRVLQAAAAAEGVAGEAEVSLTLVDDAAIKELNRTYRGVDAPTDVLSFALEEKGPDEPAYADPGGDKLLGDIIISVPTAVRQAGEYGHSLARELAFLAVHGFLHLLGYDHDTAAGAADMEARQEAILAGVGLRR</sequence>
<comment type="function">
    <text evidence="1">Single strand-specific metallo-endoribonuclease involved in late-stage 70S ribosome quality control and in maturation of the 3' terminus of the 16S rRNA.</text>
</comment>
<comment type="cofactor">
    <cofactor evidence="1">
        <name>Zn(2+)</name>
        <dbReference type="ChEBI" id="CHEBI:29105"/>
    </cofactor>
    <text evidence="1">Binds 1 zinc ion.</text>
</comment>
<comment type="subcellular location">
    <subcellularLocation>
        <location evidence="1">Cytoplasm</location>
    </subcellularLocation>
</comment>
<comment type="similarity">
    <text evidence="1">Belongs to the endoribonuclease YbeY family.</text>
</comment>
<protein>
    <recommendedName>
        <fullName evidence="1">Endoribonuclease YbeY</fullName>
        <ecNumber evidence="1">3.1.-.-</ecNumber>
    </recommendedName>
</protein>